<accession>Q9VL86</accession>
<accession>Q8SZP6</accession>
<name>CBPA1_DROME</name>
<evidence type="ECO:0000250" key="1"/>
<evidence type="ECO:0000250" key="2">
    <source>
        <dbReference type="UniProtKB" id="P00730"/>
    </source>
</evidence>
<evidence type="ECO:0000255" key="3"/>
<evidence type="ECO:0000255" key="4">
    <source>
        <dbReference type="PROSITE-ProRule" id="PRU01379"/>
    </source>
</evidence>
<evidence type="ECO:0000269" key="5">
    <source>
    </source>
</evidence>
<evidence type="ECO:0000269" key="6">
    <source>
    </source>
</evidence>
<evidence type="ECO:0000305" key="7"/>
<evidence type="ECO:0000312" key="8">
    <source>
        <dbReference type="EMBL" id="AAF52810.1"/>
    </source>
</evidence>
<evidence type="ECO:0000312" key="9">
    <source>
        <dbReference type="EMBL" id="AAL48079.1"/>
    </source>
</evidence>
<reference evidence="8" key="1">
    <citation type="journal article" date="2000" name="Science">
        <title>The genome sequence of Drosophila melanogaster.</title>
        <authorList>
            <person name="Adams M.D."/>
            <person name="Celniker S.E."/>
            <person name="Holt R.A."/>
            <person name="Evans C.A."/>
            <person name="Gocayne J.D."/>
            <person name="Amanatides P.G."/>
            <person name="Scherer S.E."/>
            <person name="Li P.W."/>
            <person name="Hoskins R.A."/>
            <person name="Galle R.F."/>
            <person name="George R.A."/>
            <person name="Lewis S.E."/>
            <person name="Richards S."/>
            <person name="Ashburner M."/>
            <person name="Henderson S.N."/>
            <person name="Sutton G.G."/>
            <person name="Wortman J.R."/>
            <person name="Yandell M.D."/>
            <person name="Zhang Q."/>
            <person name="Chen L.X."/>
            <person name="Brandon R.C."/>
            <person name="Rogers Y.-H.C."/>
            <person name="Blazej R.G."/>
            <person name="Champe M."/>
            <person name="Pfeiffer B.D."/>
            <person name="Wan K.H."/>
            <person name="Doyle C."/>
            <person name="Baxter E.G."/>
            <person name="Helt G."/>
            <person name="Nelson C.R."/>
            <person name="Miklos G.L.G."/>
            <person name="Abril J.F."/>
            <person name="Agbayani A."/>
            <person name="An H.-J."/>
            <person name="Andrews-Pfannkoch C."/>
            <person name="Baldwin D."/>
            <person name="Ballew R.M."/>
            <person name="Basu A."/>
            <person name="Baxendale J."/>
            <person name="Bayraktaroglu L."/>
            <person name="Beasley E.M."/>
            <person name="Beeson K.Y."/>
            <person name="Benos P.V."/>
            <person name="Berman B.P."/>
            <person name="Bhandari D."/>
            <person name="Bolshakov S."/>
            <person name="Borkova D."/>
            <person name="Botchan M.R."/>
            <person name="Bouck J."/>
            <person name="Brokstein P."/>
            <person name="Brottier P."/>
            <person name="Burtis K.C."/>
            <person name="Busam D.A."/>
            <person name="Butler H."/>
            <person name="Cadieu E."/>
            <person name="Center A."/>
            <person name="Chandra I."/>
            <person name="Cherry J.M."/>
            <person name="Cawley S."/>
            <person name="Dahlke C."/>
            <person name="Davenport L.B."/>
            <person name="Davies P."/>
            <person name="de Pablos B."/>
            <person name="Delcher A."/>
            <person name="Deng Z."/>
            <person name="Mays A.D."/>
            <person name="Dew I."/>
            <person name="Dietz S.M."/>
            <person name="Dodson K."/>
            <person name="Doup L.E."/>
            <person name="Downes M."/>
            <person name="Dugan-Rocha S."/>
            <person name="Dunkov B.C."/>
            <person name="Dunn P."/>
            <person name="Durbin K.J."/>
            <person name="Evangelista C.C."/>
            <person name="Ferraz C."/>
            <person name="Ferriera S."/>
            <person name="Fleischmann W."/>
            <person name="Fosler C."/>
            <person name="Gabrielian A.E."/>
            <person name="Garg N.S."/>
            <person name="Gelbart W.M."/>
            <person name="Glasser K."/>
            <person name="Glodek A."/>
            <person name="Gong F."/>
            <person name="Gorrell J.H."/>
            <person name="Gu Z."/>
            <person name="Guan P."/>
            <person name="Harris M."/>
            <person name="Harris N.L."/>
            <person name="Harvey D.A."/>
            <person name="Heiman T.J."/>
            <person name="Hernandez J.R."/>
            <person name="Houck J."/>
            <person name="Hostin D."/>
            <person name="Houston K.A."/>
            <person name="Howland T.J."/>
            <person name="Wei M.-H."/>
            <person name="Ibegwam C."/>
            <person name="Jalali M."/>
            <person name="Kalush F."/>
            <person name="Karpen G.H."/>
            <person name="Ke Z."/>
            <person name="Kennison J.A."/>
            <person name="Ketchum K.A."/>
            <person name="Kimmel B.E."/>
            <person name="Kodira C.D."/>
            <person name="Kraft C.L."/>
            <person name="Kravitz S."/>
            <person name="Kulp D."/>
            <person name="Lai Z."/>
            <person name="Lasko P."/>
            <person name="Lei Y."/>
            <person name="Levitsky A.A."/>
            <person name="Li J.H."/>
            <person name="Li Z."/>
            <person name="Liang Y."/>
            <person name="Lin X."/>
            <person name="Liu X."/>
            <person name="Mattei B."/>
            <person name="McIntosh T.C."/>
            <person name="McLeod M.P."/>
            <person name="McPherson D."/>
            <person name="Merkulov G."/>
            <person name="Milshina N.V."/>
            <person name="Mobarry C."/>
            <person name="Morris J."/>
            <person name="Moshrefi A."/>
            <person name="Mount S.M."/>
            <person name="Moy M."/>
            <person name="Murphy B."/>
            <person name="Murphy L."/>
            <person name="Muzny D.M."/>
            <person name="Nelson D.L."/>
            <person name="Nelson D.R."/>
            <person name="Nelson K.A."/>
            <person name="Nixon K."/>
            <person name="Nusskern D.R."/>
            <person name="Pacleb J.M."/>
            <person name="Palazzolo M."/>
            <person name="Pittman G.S."/>
            <person name="Pan S."/>
            <person name="Pollard J."/>
            <person name="Puri V."/>
            <person name="Reese M.G."/>
            <person name="Reinert K."/>
            <person name="Remington K."/>
            <person name="Saunders R.D.C."/>
            <person name="Scheeler F."/>
            <person name="Shen H."/>
            <person name="Shue B.C."/>
            <person name="Siden-Kiamos I."/>
            <person name="Simpson M."/>
            <person name="Skupski M.P."/>
            <person name="Smith T.J."/>
            <person name="Spier E."/>
            <person name="Spradling A.C."/>
            <person name="Stapleton M."/>
            <person name="Strong R."/>
            <person name="Sun E."/>
            <person name="Svirskas R."/>
            <person name="Tector C."/>
            <person name="Turner R."/>
            <person name="Venter E."/>
            <person name="Wang A.H."/>
            <person name="Wang X."/>
            <person name="Wang Z.-Y."/>
            <person name="Wassarman D.A."/>
            <person name="Weinstock G.M."/>
            <person name="Weissenbach J."/>
            <person name="Williams S.M."/>
            <person name="Woodage T."/>
            <person name="Worley K.C."/>
            <person name="Wu D."/>
            <person name="Yang S."/>
            <person name="Yao Q.A."/>
            <person name="Ye J."/>
            <person name="Yeh R.-F."/>
            <person name="Zaveri J.S."/>
            <person name="Zhan M."/>
            <person name="Zhang G."/>
            <person name="Zhao Q."/>
            <person name="Zheng L."/>
            <person name="Zheng X.H."/>
            <person name="Zhong F.N."/>
            <person name="Zhong W."/>
            <person name="Zhou X."/>
            <person name="Zhu S.C."/>
            <person name="Zhu X."/>
            <person name="Smith H.O."/>
            <person name="Gibbs R.A."/>
            <person name="Myers E.W."/>
            <person name="Rubin G.M."/>
            <person name="Venter J.C."/>
        </authorList>
    </citation>
    <scope>NUCLEOTIDE SEQUENCE [LARGE SCALE GENOMIC DNA]</scope>
    <source>
        <strain evidence="5">Berkeley</strain>
    </source>
</reference>
<reference evidence="7 8" key="2">
    <citation type="journal article" date="2002" name="Genome Biol.">
        <title>Annotation of the Drosophila melanogaster euchromatic genome: a systematic review.</title>
        <authorList>
            <person name="Misra S."/>
            <person name="Crosby M.A."/>
            <person name="Mungall C.J."/>
            <person name="Matthews B.B."/>
            <person name="Campbell K.S."/>
            <person name="Hradecky P."/>
            <person name="Huang Y."/>
            <person name="Kaminker J.S."/>
            <person name="Millburn G.H."/>
            <person name="Prochnik S.E."/>
            <person name="Smith C.D."/>
            <person name="Tupy J.L."/>
            <person name="Whitfield E.J."/>
            <person name="Bayraktaroglu L."/>
            <person name="Berman B.P."/>
            <person name="Bettencourt B.R."/>
            <person name="Celniker S.E."/>
            <person name="de Grey A.D.N.J."/>
            <person name="Drysdale R.A."/>
            <person name="Harris N.L."/>
            <person name="Richter J."/>
            <person name="Russo S."/>
            <person name="Schroeder A.J."/>
            <person name="Shu S.Q."/>
            <person name="Stapleton M."/>
            <person name="Yamada C."/>
            <person name="Ashburner M."/>
            <person name="Gelbart W.M."/>
            <person name="Rubin G.M."/>
            <person name="Lewis S.E."/>
        </authorList>
    </citation>
    <scope>GENOME REANNOTATION</scope>
    <source>
        <strain>Berkeley</strain>
    </source>
</reference>
<reference evidence="9" key="3">
    <citation type="journal article" date="2002" name="Genome Biol.">
        <title>A Drosophila full-length cDNA resource.</title>
        <authorList>
            <person name="Stapleton M."/>
            <person name="Carlson J.W."/>
            <person name="Brokstein P."/>
            <person name="Yu C."/>
            <person name="Champe M."/>
            <person name="George R.A."/>
            <person name="Guarin H."/>
            <person name="Kronmiller B."/>
            <person name="Pacleb J.M."/>
            <person name="Park S."/>
            <person name="Wan K.H."/>
            <person name="Rubin G.M."/>
            <person name="Celniker S.E."/>
        </authorList>
    </citation>
    <scope>NUCLEOTIDE SEQUENCE [LARGE SCALE MRNA]</scope>
    <source>
        <strain evidence="9">Berkeley</strain>
        <tissue evidence="6">Embryo</tissue>
    </source>
</reference>
<keyword id="KW-0121">Carboxypeptidase</keyword>
<keyword id="KW-1015">Disulfide bond</keyword>
<keyword id="KW-0378">Hydrolase</keyword>
<keyword id="KW-0479">Metal-binding</keyword>
<keyword id="KW-0482">Metalloprotease</keyword>
<keyword id="KW-0645">Protease</keyword>
<keyword id="KW-1185">Reference proteome</keyword>
<keyword id="KW-0964">Secreted</keyword>
<keyword id="KW-0732">Signal</keyword>
<keyword id="KW-0862">Zinc</keyword>
<gene>
    <name type="ORF">CG17633</name>
</gene>
<feature type="signal peptide" evidence="3">
    <location>
        <begin position="1"/>
        <end position="22"/>
    </location>
</feature>
<feature type="chain" id="PRO_0000233307" description="Zinc carboxypeptidase A 1" evidence="3">
    <location>
        <begin position="23"/>
        <end position="430"/>
    </location>
</feature>
<feature type="domain" description="Peptidase M14" evidence="4">
    <location>
        <begin position="124"/>
        <end position="423"/>
    </location>
</feature>
<feature type="active site" description="Proton donor/acceptor" evidence="4">
    <location>
        <position position="386"/>
    </location>
</feature>
<feature type="binding site" evidence="4">
    <location>
        <position position="187"/>
    </location>
    <ligand>
        <name>Zn(2+)</name>
        <dbReference type="ChEBI" id="CHEBI:29105"/>
        <note>catalytic</note>
    </ligand>
</feature>
<feature type="binding site" evidence="4">
    <location>
        <position position="190"/>
    </location>
    <ligand>
        <name>Zn(2+)</name>
        <dbReference type="ChEBI" id="CHEBI:29105"/>
        <note>catalytic</note>
    </ligand>
</feature>
<feature type="binding site" evidence="4">
    <location>
        <position position="311"/>
    </location>
    <ligand>
        <name>Zn(2+)</name>
        <dbReference type="ChEBI" id="CHEBI:29105"/>
        <note>catalytic</note>
    </ligand>
</feature>
<feature type="disulfide bond" evidence="2">
    <location>
        <begin position="252"/>
        <end position="275"/>
    </location>
</feature>
<feature type="sequence conflict" description="In Ref. 3; AAL48079." evidence="7" ref="3">
    <original>R</original>
    <variation>G</variation>
    <location>
        <position position="259"/>
    </location>
</feature>
<sequence>MSLNKCLLFALLAIVASASVSAERVRYDNYRMYKVNSENAKQLEVLKDLEGSSDSIMFLDGVHLVGADIQIIVAPHKVPDFLEILGKSEIKYELQSRDVQKSLDEIDEKVAIKGRATTAYNWAQYYELDDTYAWLQSLAQTNPGVVTLIEGGKTYQGRSILGVKITKGGETINGKAKPGIFLEAGIHAREWIAPAAATFIINQLLTSEVENIKELAENYTWYVLPHANPDGYVYTHTTNRLWRKTRTPYGSCFGADPNRNWGFHWNEVGASSSACSDTYAGPSAFSEIETLSLSKFIEGLKGKVQLYLSLHAYSQYLLYPYGHTSDLPDNVADFEKVFDASIAAVNKRYGTTYTGGNIYDAIYPAAGASVDWAYGTQDVRMAFCYELRPSSTSYLTGFKLPAEQIVPASEELLDSIVAMATEVKSLGYFD</sequence>
<comment type="cofactor">
    <cofactor evidence="2">
        <name>Zn(2+)</name>
        <dbReference type="ChEBI" id="CHEBI:29105"/>
    </cofactor>
    <text evidence="2">Binds 1 zinc ion per subunit.</text>
</comment>
<comment type="subcellular location">
    <subcellularLocation>
        <location evidence="1">Secreted</location>
    </subcellularLocation>
</comment>
<comment type="similarity">
    <text evidence="3">Belongs to the peptidase M14 family.</text>
</comment>
<dbReference type="EC" id="3.4.17.-"/>
<dbReference type="EMBL" id="AE014134">
    <property type="protein sequence ID" value="AAF52810.1"/>
    <property type="molecule type" value="Genomic_DNA"/>
</dbReference>
<dbReference type="EMBL" id="AY070608">
    <property type="protein sequence ID" value="AAL48079.1"/>
    <property type="molecule type" value="mRNA"/>
</dbReference>
<dbReference type="RefSeq" id="NP_609310.2">
    <property type="nucleotide sequence ID" value="NM_135466.4"/>
</dbReference>
<dbReference type="SMR" id="Q9VL86"/>
<dbReference type="FunCoup" id="Q9VL86">
    <property type="interactions" value="31"/>
</dbReference>
<dbReference type="STRING" id="7227.FBpp0079464"/>
<dbReference type="MEROPS" id="M14.A08"/>
<dbReference type="PaxDb" id="7227-FBpp0079464"/>
<dbReference type="DNASU" id="34297"/>
<dbReference type="EnsemblMetazoa" id="FBtr0079868">
    <property type="protein sequence ID" value="FBpp0079464"/>
    <property type="gene ID" value="FBgn0032144"/>
</dbReference>
<dbReference type="GeneID" id="34297"/>
<dbReference type="KEGG" id="dme:Dmel_CG17633"/>
<dbReference type="UCSC" id="CG17633-RA">
    <property type="organism name" value="d. melanogaster"/>
</dbReference>
<dbReference type="AGR" id="FB:FBgn0032144"/>
<dbReference type="FlyBase" id="FBgn0032144">
    <property type="gene designation" value="CG17633"/>
</dbReference>
<dbReference type="VEuPathDB" id="VectorBase:FBgn0032144"/>
<dbReference type="eggNOG" id="KOG2650">
    <property type="taxonomic scope" value="Eukaryota"/>
</dbReference>
<dbReference type="GeneTree" id="ENSGT00940000169829"/>
<dbReference type="HOGENOM" id="CLU_019326_2_1_1"/>
<dbReference type="InParanoid" id="Q9VL86"/>
<dbReference type="OMA" id="MYKVNSE"/>
<dbReference type="OrthoDB" id="3626597at2759"/>
<dbReference type="PhylomeDB" id="Q9VL86"/>
<dbReference type="Reactome" id="R-DME-2022377">
    <property type="pathway name" value="Metabolism of Angiotensinogen to Angiotensins"/>
</dbReference>
<dbReference type="BioGRID-ORCS" id="34297">
    <property type="hits" value="0 hits in 3 CRISPR screens"/>
</dbReference>
<dbReference type="GenomeRNAi" id="34297"/>
<dbReference type="PRO" id="PR:Q9VL86"/>
<dbReference type="Proteomes" id="UP000000803">
    <property type="component" value="Chromosome 2L"/>
</dbReference>
<dbReference type="Bgee" id="FBgn0032144">
    <property type="expression patterns" value="Expressed in midgut large flat cell (Drosophila) in digestive tract and 38 other cell types or tissues"/>
</dbReference>
<dbReference type="ExpressionAtlas" id="Q9VL86">
    <property type="expression patterns" value="baseline and differential"/>
</dbReference>
<dbReference type="GO" id="GO:0005615">
    <property type="term" value="C:extracellular space"/>
    <property type="evidence" value="ECO:0000250"/>
    <property type="project" value="UniProtKB"/>
</dbReference>
<dbReference type="GO" id="GO:0004181">
    <property type="term" value="F:metallocarboxypeptidase activity"/>
    <property type="evidence" value="ECO:0000250"/>
    <property type="project" value="FlyBase"/>
</dbReference>
<dbReference type="GO" id="GO:0008270">
    <property type="term" value="F:zinc ion binding"/>
    <property type="evidence" value="ECO:0007669"/>
    <property type="project" value="InterPro"/>
</dbReference>
<dbReference type="GO" id="GO:0006508">
    <property type="term" value="P:proteolysis"/>
    <property type="evidence" value="ECO:0000318"/>
    <property type="project" value="GO_Central"/>
</dbReference>
<dbReference type="CDD" id="cd03860">
    <property type="entry name" value="M14_CP_A-B_like"/>
    <property type="match status" value="1"/>
</dbReference>
<dbReference type="FunFam" id="3.30.70.340:FF:000002">
    <property type="entry name" value="Carboxypeptidase A"/>
    <property type="match status" value="1"/>
</dbReference>
<dbReference type="FunFam" id="3.40.630.10:FF:000001">
    <property type="entry name" value="Carboxypeptidase B"/>
    <property type="match status" value="1"/>
</dbReference>
<dbReference type="Gene3D" id="3.30.70.340">
    <property type="entry name" value="Metallocarboxypeptidase-like"/>
    <property type="match status" value="1"/>
</dbReference>
<dbReference type="Gene3D" id="3.40.630.10">
    <property type="entry name" value="Zn peptidases"/>
    <property type="match status" value="1"/>
</dbReference>
<dbReference type="InterPro" id="IPR036990">
    <property type="entry name" value="M14A-like_propep"/>
</dbReference>
<dbReference type="InterPro" id="IPR003146">
    <property type="entry name" value="M14A_act_pep"/>
</dbReference>
<dbReference type="InterPro" id="IPR000834">
    <property type="entry name" value="Peptidase_M14"/>
</dbReference>
<dbReference type="PANTHER" id="PTHR11705">
    <property type="entry name" value="PROTEASE FAMILY M14 CARBOXYPEPTIDASE A,B"/>
    <property type="match status" value="1"/>
</dbReference>
<dbReference type="PANTHER" id="PTHR11705:SF156">
    <property type="entry name" value="RH39904P-RELATED"/>
    <property type="match status" value="1"/>
</dbReference>
<dbReference type="Pfam" id="PF00246">
    <property type="entry name" value="Peptidase_M14"/>
    <property type="match status" value="1"/>
</dbReference>
<dbReference type="Pfam" id="PF02244">
    <property type="entry name" value="Propep_M14"/>
    <property type="match status" value="1"/>
</dbReference>
<dbReference type="PRINTS" id="PR00765">
    <property type="entry name" value="CRBOXYPTASEA"/>
</dbReference>
<dbReference type="SMART" id="SM00631">
    <property type="entry name" value="Zn_pept"/>
    <property type="match status" value="1"/>
</dbReference>
<dbReference type="SUPFAM" id="SSF54897">
    <property type="entry name" value="Protease propeptides/inhibitors"/>
    <property type="match status" value="1"/>
</dbReference>
<dbReference type="SUPFAM" id="SSF53187">
    <property type="entry name" value="Zn-dependent exopeptidases"/>
    <property type="match status" value="1"/>
</dbReference>
<dbReference type="PROSITE" id="PS00132">
    <property type="entry name" value="CARBOXYPEPT_ZN_1"/>
    <property type="match status" value="1"/>
</dbReference>
<dbReference type="PROSITE" id="PS52035">
    <property type="entry name" value="PEPTIDASE_M14"/>
    <property type="match status" value="1"/>
</dbReference>
<organism>
    <name type="scientific">Drosophila melanogaster</name>
    <name type="common">Fruit fly</name>
    <dbReference type="NCBI Taxonomy" id="7227"/>
    <lineage>
        <taxon>Eukaryota</taxon>
        <taxon>Metazoa</taxon>
        <taxon>Ecdysozoa</taxon>
        <taxon>Arthropoda</taxon>
        <taxon>Hexapoda</taxon>
        <taxon>Insecta</taxon>
        <taxon>Pterygota</taxon>
        <taxon>Neoptera</taxon>
        <taxon>Endopterygota</taxon>
        <taxon>Diptera</taxon>
        <taxon>Brachycera</taxon>
        <taxon>Muscomorpha</taxon>
        <taxon>Ephydroidea</taxon>
        <taxon>Drosophilidae</taxon>
        <taxon>Drosophila</taxon>
        <taxon>Sophophora</taxon>
    </lineage>
</organism>
<proteinExistence type="evidence at transcript level"/>
<protein>
    <recommendedName>
        <fullName>Zinc carboxypeptidase A 1</fullName>
        <ecNumber>3.4.17.-</ecNumber>
    </recommendedName>
</protein>